<feature type="chain" id="PRO_0000263351" description="Peptide chain release factor 1">
    <location>
        <begin position="1"/>
        <end position="360"/>
    </location>
</feature>
<feature type="region of interest" description="Disordered" evidence="2">
    <location>
        <begin position="285"/>
        <end position="313"/>
    </location>
</feature>
<feature type="modified residue" description="N5-methylglutamine" evidence="1">
    <location>
        <position position="235"/>
    </location>
</feature>
<proteinExistence type="inferred from homology"/>
<accession>Q31ZQ4</accession>
<gene>
    <name evidence="1" type="primary">prfA</name>
    <name type="ordered locus">SBO_1856</name>
</gene>
<organism>
    <name type="scientific">Shigella boydii serotype 4 (strain Sb227)</name>
    <dbReference type="NCBI Taxonomy" id="300268"/>
    <lineage>
        <taxon>Bacteria</taxon>
        <taxon>Pseudomonadati</taxon>
        <taxon>Pseudomonadota</taxon>
        <taxon>Gammaproteobacteria</taxon>
        <taxon>Enterobacterales</taxon>
        <taxon>Enterobacteriaceae</taxon>
        <taxon>Shigella</taxon>
    </lineage>
</organism>
<keyword id="KW-0963">Cytoplasm</keyword>
<keyword id="KW-0488">Methylation</keyword>
<keyword id="KW-0648">Protein biosynthesis</keyword>
<name>RF1_SHIBS</name>
<dbReference type="EMBL" id="CP000036">
    <property type="protein sequence ID" value="ABB66454.1"/>
    <property type="molecule type" value="Genomic_DNA"/>
</dbReference>
<dbReference type="RefSeq" id="WP_000804740.1">
    <property type="nucleotide sequence ID" value="NC_007613.1"/>
</dbReference>
<dbReference type="SMR" id="Q31ZQ4"/>
<dbReference type="KEGG" id="sbo:SBO_1856"/>
<dbReference type="HOGENOM" id="CLU_036856_0_1_6"/>
<dbReference type="Proteomes" id="UP000007067">
    <property type="component" value="Chromosome"/>
</dbReference>
<dbReference type="GO" id="GO:0005737">
    <property type="term" value="C:cytoplasm"/>
    <property type="evidence" value="ECO:0007669"/>
    <property type="project" value="UniProtKB-SubCell"/>
</dbReference>
<dbReference type="GO" id="GO:0016149">
    <property type="term" value="F:translation release factor activity, codon specific"/>
    <property type="evidence" value="ECO:0007669"/>
    <property type="project" value="UniProtKB-UniRule"/>
</dbReference>
<dbReference type="FunFam" id="3.30.160.20:FF:000004">
    <property type="entry name" value="Peptide chain release factor 1"/>
    <property type="match status" value="1"/>
</dbReference>
<dbReference type="FunFam" id="3.30.70.1660:FF:000002">
    <property type="entry name" value="Peptide chain release factor 1"/>
    <property type="match status" value="1"/>
</dbReference>
<dbReference type="FunFam" id="3.30.70.1660:FF:000004">
    <property type="entry name" value="Peptide chain release factor 1"/>
    <property type="match status" value="1"/>
</dbReference>
<dbReference type="Gene3D" id="3.30.160.20">
    <property type="match status" value="1"/>
</dbReference>
<dbReference type="Gene3D" id="3.30.70.1660">
    <property type="match status" value="1"/>
</dbReference>
<dbReference type="Gene3D" id="6.10.140.1950">
    <property type="match status" value="1"/>
</dbReference>
<dbReference type="HAMAP" id="MF_00093">
    <property type="entry name" value="Rel_fac_1"/>
    <property type="match status" value="1"/>
</dbReference>
<dbReference type="InterPro" id="IPR005139">
    <property type="entry name" value="PCRF"/>
</dbReference>
<dbReference type="InterPro" id="IPR000352">
    <property type="entry name" value="Pep_chain_release_fac_I"/>
</dbReference>
<dbReference type="InterPro" id="IPR045853">
    <property type="entry name" value="Pep_chain_release_fac_I_sf"/>
</dbReference>
<dbReference type="InterPro" id="IPR050057">
    <property type="entry name" value="Prokaryotic/Mito_RF"/>
</dbReference>
<dbReference type="InterPro" id="IPR004373">
    <property type="entry name" value="RF-1"/>
</dbReference>
<dbReference type="NCBIfam" id="TIGR00019">
    <property type="entry name" value="prfA"/>
    <property type="match status" value="1"/>
</dbReference>
<dbReference type="NCBIfam" id="NF001859">
    <property type="entry name" value="PRK00591.1"/>
    <property type="match status" value="1"/>
</dbReference>
<dbReference type="PANTHER" id="PTHR43804">
    <property type="entry name" value="LD18447P"/>
    <property type="match status" value="1"/>
</dbReference>
<dbReference type="PANTHER" id="PTHR43804:SF7">
    <property type="entry name" value="LD18447P"/>
    <property type="match status" value="1"/>
</dbReference>
<dbReference type="Pfam" id="PF03462">
    <property type="entry name" value="PCRF"/>
    <property type="match status" value="1"/>
</dbReference>
<dbReference type="Pfam" id="PF00472">
    <property type="entry name" value="RF-1"/>
    <property type="match status" value="1"/>
</dbReference>
<dbReference type="SMART" id="SM00937">
    <property type="entry name" value="PCRF"/>
    <property type="match status" value="1"/>
</dbReference>
<dbReference type="SUPFAM" id="SSF75620">
    <property type="entry name" value="Release factor"/>
    <property type="match status" value="1"/>
</dbReference>
<dbReference type="PROSITE" id="PS00745">
    <property type="entry name" value="RF_PROK_I"/>
    <property type="match status" value="1"/>
</dbReference>
<evidence type="ECO:0000255" key="1">
    <source>
        <dbReference type="HAMAP-Rule" id="MF_00093"/>
    </source>
</evidence>
<evidence type="ECO:0000256" key="2">
    <source>
        <dbReference type="SAM" id="MobiDB-lite"/>
    </source>
</evidence>
<comment type="function">
    <text evidence="1">Peptide chain release factor 1 directs the termination of translation in response to the peptide chain termination codons UAG and UAA.</text>
</comment>
<comment type="subcellular location">
    <subcellularLocation>
        <location evidence="1">Cytoplasm</location>
    </subcellularLocation>
</comment>
<comment type="PTM">
    <text evidence="1">Methylated by PrmC. Methylation increases the termination efficiency of RF1.</text>
</comment>
<comment type="similarity">
    <text evidence="1">Belongs to the prokaryotic/mitochondrial release factor family.</text>
</comment>
<reference key="1">
    <citation type="journal article" date="2005" name="Nucleic Acids Res.">
        <title>Genome dynamics and diversity of Shigella species, the etiologic agents of bacillary dysentery.</title>
        <authorList>
            <person name="Yang F."/>
            <person name="Yang J."/>
            <person name="Zhang X."/>
            <person name="Chen L."/>
            <person name="Jiang Y."/>
            <person name="Yan Y."/>
            <person name="Tang X."/>
            <person name="Wang J."/>
            <person name="Xiong Z."/>
            <person name="Dong J."/>
            <person name="Xue Y."/>
            <person name="Zhu Y."/>
            <person name="Xu X."/>
            <person name="Sun L."/>
            <person name="Chen S."/>
            <person name="Nie H."/>
            <person name="Peng J."/>
            <person name="Xu J."/>
            <person name="Wang Y."/>
            <person name="Yuan Z."/>
            <person name="Wen Y."/>
            <person name="Yao Z."/>
            <person name="Shen Y."/>
            <person name="Qiang B."/>
            <person name="Hou Y."/>
            <person name="Yu J."/>
            <person name="Jin Q."/>
        </authorList>
    </citation>
    <scope>NUCLEOTIDE SEQUENCE [LARGE SCALE GENOMIC DNA]</scope>
    <source>
        <strain>Sb227</strain>
    </source>
</reference>
<sequence length="360" mass="40516">MKPSIVAKLEALHERHEEVQALLGDAQTIADQERFRALSREYAQLSDVSRCFTDWQQVQEDIETAQMMLDDPEMREMAQDELRKAKEKSEQLEQQLQVLLLPKDPDDERNAFLEVRAGTGGDEAALFAGDLFRMYSRYAEARRWRVEIMSASEGEHGGYKEIIAKISGDGVYGRLKFESGGHRVQRVPATESQGRIHTSACTVAVMPELPDAELPDINPADLRIDTFRSSGAGGQHVNTTDSAIRITHLPTGIVVECQDERSQHKNKAKALSVLGARIHAAEMAKRQQAEASTRRNLLGSGDRSDRNRTYNFPQGRVTDHRINLTLYRLDEVMEGKLDMLIEPIIQEHQADQLAALSEQE</sequence>
<protein>
    <recommendedName>
        <fullName evidence="1">Peptide chain release factor 1</fullName>
        <shortName evidence="1">RF-1</shortName>
    </recommendedName>
</protein>